<accession>Q0HWM0</accession>
<sequence length="703" mass="77824">MTAKPQKSCQFKRDYPQLINLYPPCALTTAQSLDNLTRLRLSRLTTQSTQPIQGLCVMGQWGLGDGLELLSLLQHWQTQTQTQTQPQGNTRLLVKVFEPNPINDYELKLLWDQSQSLISKSHLQPIANAILKAKPARIIGCQRLIFDDGRITVDLHFGDLHSALSQLPHSPAHLIQQWLVLPHLAAQLNGKQVWQMARLSTDDAQLIGVNLAETVRQLAHQSGFSTLNVSQDTSNGDASDALQSQIITDEILLHERKLLRQQADTAQAFTPKPAALVAKDHPVAIVGGGLASANLMLSLAERGQSSTLFCKDNELGQGASGNRQGAIYPLLTPENDELSRFFQQAFLFSRRRIEALSHASMMETETAKNVTAISHDFCGVLQTGHDERSQQRLDKIIQSQDWPAEIAYAVDANEANEIAQIGIDKAGFFYPLGGWVCPFEYAKAAVDKASQLANVQCHFNTEITEIECDANAWYLHSQGQRFGPFRQLVLANGAQLTQFSACERLQISPFRGQVSHVPAQFKLSQLATVLCANGYLTPSHQGLHCLGASYVKAAEHFDFCPQEQRENLGKMQESYPNQAWVDDIDISGNSARVGVRMVTRDHFPMMGCAPDVAEILARYELHQLNQQQAEQSKHYWQTTPAPILDGLYILGGLGSRGLSSGPLAAECLAAQLTGEPLPLDWPTLNKLNPNRMWLRKLLKGKAL</sequence>
<protein>
    <recommendedName>
        <fullName evidence="1">tRNA 5-methylaminomethyl-2-thiouridine biosynthesis bifunctional protein MnmC</fullName>
        <shortName evidence="1">tRNA mnm(5)s(2)U biosynthesis bifunctional protein</shortName>
    </recommendedName>
    <domain>
        <recommendedName>
            <fullName evidence="1">tRNA (mnm(5)s(2)U34)-methyltransferase</fullName>
            <ecNumber evidence="1">2.1.1.61</ecNumber>
        </recommendedName>
    </domain>
    <domain>
        <recommendedName>
            <fullName evidence="1">FAD-dependent cmnm(5)s(2)U34 oxidoreductase</fullName>
            <ecNumber evidence="1">1.5.-.-</ecNumber>
        </recommendedName>
    </domain>
</protein>
<feature type="chain" id="PRO_0000348036" description="tRNA 5-methylaminomethyl-2-thiouridine biosynthesis bifunctional protein MnmC">
    <location>
        <begin position="1"/>
        <end position="703"/>
    </location>
</feature>
<feature type="region of interest" description="tRNA (mnm(5)s(2)U34)-methyltransferase">
    <location>
        <begin position="1"/>
        <end position="281"/>
    </location>
</feature>
<feature type="region of interest" description="FAD-dependent cmnm(5)s(2)U34 oxidoreductase">
    <location>
        <begin position="286"/>
        <end position="703"/>
    </location>
</feature>
<proteinExistence type="inferred from homology"/>
<evidence type="ECO:0000255" key="1">
    <source>
        <dbReference type="HAMAP-Rule" id="MF_01102"/>
    </source>
</evidence>
<evidence type="ECO:0000305" key="2"/>
<keyword id="KW-0963">Cytoplasm</keyword>
<keyword id="KW-0274">FAD</keyword>
<keyword id="KW-0285">Flavoprotein</keyword>
<keyword id="KW-0489">Methyltransferase</keyword>
<keyword id="KW-0511">Multifunctional enzyme</keyword>
<keyword id="KW-0560">Oxidoreductase</keyword>
<keyword id="KW-0949">S-adenosyl-L-methionine</keyword>
<keyword id="KW-0808">Transferase</keyword>
<keyword id="KW-0819">tRNA processing</keyword>
<reference key="1">
    <citation type="submission" date="2006-08" db="EMBL/GenBank/DDBJ databases">
        <title>Complete sequence of chromosome 1 of Shewanella sp. MR-7.</title>
        <authorList>
            <person name="Copeland A."/>
            <person name="Lucas S."/>
            <person name="Lapidus A."/>
            <person name="Barry K."/>
            <person name="Detter J.C."/>
            <person name="Glavina del Rio T."/>
            <person name="Hammon N."/>
            <person name="Israni S."/>
            <person name="Dalin E."/>
            <person name="Tice H."/>
            <person name="Pitluck S."/>
            <person name="Kiss H."/>
            <person name="Brettin T."/>
            <person name="Bruce D."/>
            <person name="Han C."/>
            <person name="Tapia R."/>
            <person name="Gilna P."/>
            <person name="Schmutz J."/>
            <person name="Larimer F."/>
            <person name="Land M."/>
            <person name="Hauser L."/>
            <person name="Kyrpides N."/>
            <person name="Mikhailova N."/>
            <person name="Nealson K."/>
            <person name="Konstantinidis K."/>
            <person name="Klappenbach J."/>
            <person name="Tiedje J."/>
            <person name="Richardson P."/>
        </authorList>
    </citation>
    <scope>NUCLEOTIDE SEQUENCE [LARGE SCALE GENOMIC DNA]</scope>
    <source>
        <strain>MR-7</strain>
    </source>
</reference>
<comment type="function">
    <text evidence="1">Catalyzes the last two steps in the biosynthesis of 5-methylaminomethyl-2-thiouridine (mnm(5)s(2)U) at the wobble position (U34) in tRNA. Catalyzes the FAD-dependent demodification of cmnm(5)s(2)U34 to nm(5)s(2)U34, followed by the transfer of a methyl group from S-adenosyl-L-methionine to nm(5)s(2)U34, to form mnm(5)s(2)U34.</text>
</comment>
<comment type="catalytic activity">
    <reaction evidence="1">
        <text>5-aminomethyl-2-thiouridine(34) in tRNA + S-adenosyl-L-methionine = 5-methylaminomethyl-2-thiouridine(34) in tRNA + S-adenosyl-L-homocysteine + H(+)</text>
        <dbReference type="Rhea" id="RHEA:19569"/>
        <dbReference type="Rhea" id="RHEA-COMP:10195"/>
        <dbReference type="Rhea" id="RHEA-COMP:10197"/>
        <dbReference type="ChEBI" id="CHEBI:15378"/>
        <dbReference type="ChEBI" id="CHEBI:57856"/>
        <dbReference type="ChEBI" id="CHEBI:59789"/>
        <dbReference type="ChEBI" id="CHEBI:74454"/>
        <dbReference type="ChEBI" id="CHEBI:74455"/>
        <dbReference type="EC" id="2.1.1.61"/>
    </reaction>
</comment>
<comment type="cofactor">
    <cofactor evidence="1">
        <name>FAD</name>
        <dbReference type="ChEBI" id="CHEBI:57692"/>
    </cofactor>
</comment>
<comment type="subcellular location">
    <subcellularLocation>
        <location evidence="1">Cytoplasm</location>
    </subcellularLocation>
</comment>
<comment type="similarity">
    <text evidence="1">In the N-terminal section; belongs to the methyltransferase superfamily. tRNA (mnm(5)s(2)U34)-methyltransferase family.</text>
</comment>
<comment type="similarity">
    <text evidence="1">In the C-terminal section; belongs to the DAO family.</text>
</comment>
<comment type="sequence caution" evidence="2">
    <conflict type="erroneous initiation">
        <sequence resource="EMBL-CDS" id="ABI42485"/>
    </conflict>
</comment>
<name>MNMC_SHESR</name>
<gene>
    <name evidence="1" type="primary">mnmC</name>
    <name type="ordered locus">Shewmr7_1486</name>
</gene>
<organism>
    <name type="scientific">Shewanella sp. (strain MR-7)</name>
    <dbReference type="NCBI Taxonomy" id="60481"/>
    <lineage>
        <taxon>Bacteria</taxon>
        <taxon>Pseudomonadati</taxon>
        <taxon>Pseudomonadota</taxon>
        <taxon>Gammaproteobacteria</taxon>
        <taxon>Alteromonadales</taxon>
        <taxon>Shewanellaceae</taxon>
        <taxon>Shewanella</taxon>
    </lineage>
</organism>
<dbReference type="EC" id="2.1.1.61" evidence="1"/>
<dbReference type="EC" id="1.5.-.-" evidence="1"/>
<dbReference type="EMBL" id="CP000444">
    <property type="protein sequence ID" value="ABI42485.1"/>
    <property type="status" value="ALT_INIT"/>
    <property type="molecule type" value="Genomic_DNA"/>
</dbReference>
<dbReference type="SMR" id="Q0HWM0"/>
<dbReference type="KEGG" id="shm:Shewmr7_1486"/>
<dbReference type="HOGENOM" id="CLU_022427_2_1_6"/>
<dbReference type="GO" id="GO:0005737">
    <property type="term" value="C:cytoplasm"/>
    <property type="evidence" value="ECO:0007669"/>
    <property type="project" value="UniProtKB-SubCell"/>
</dbReference>
<dbReference type="GO" id="GO:0050660">
    <property type="term" value="F:flavin adenine dinucleotide binding"/>
    <property type="evidence" value="ECO:0007669"/>
    <property type="project" value="UniProtKB-UniRule"/>
</dbReference>
<dbReference type="GO" id="GO:0016645">
    <property type="term" value="F:oxidoreductase activity, acting on the CH-NH group of donors"/>
    <property type="evidence" value="ECO:0007669"/>
    <property type="project" value="InterPro"/>
</dbReference>
<dbReference type="GO" id="GO:0004808">
    <property type="term" value="F:tRNA (5-methylaminomethyl-2-thiouridylate)(34)-methyltransferase activity"/>
    <property type="evidence" value="ECO:0007669"/>
    <property type="project" value="UniProtKB-EC"/>
</dbReference>
<dbReference type="GO" id="GO:0032259">
    <property type="term" value="P:methylation"/>
    <property type="evidence" value="ECO:0007669"/>
    <property type="project" value="UniProtKB-KW"/>
</dbReference>
<dbReference type="GO" id="GO:0002098">
    <property type="term" value="P:tRNA wobble uridine modification"/>
    <property type="evidence" value="ECO:0007669"/>
    <property type="project" value="TreeGrafter"/>
</dbReference>
<dbReference type="Gene3D" id="3.30.9.10">
    <property type="entry name" value="D-Amino Acid Oxidase, subunit A, domain 2"/>
    <property type="match status" value="1"/>
</dbReference>
<dbReference type="Gene3D" id="3.50.50.60">
    <property type="entry name" value="FAD/NAD(P)-binding domain"/>
    <property type="match status" value="1"/>
</dbReference>
<dbReference type="Gene3D" id="3.40.50.150">
    <property type="entry name" value="Vaccinia Virus protein VP39"/>
    <property type="match status" value="1"/>
</dbReference>
<dbReference type="HAMAP" id="MF_01102">
    <property type="entry name" value="MnmC"/>
    <property type="match status" value="1"/>
</dbReference>
<dbReference type="InterPro" id="IPR006076">
    <property type="entry name" value="FAD-dep_OxRdtase"/>
</dbReference>
<dbReference type="InterPro" id="IPR036188">
    <property type="entry name" value="FAD/NAD-bd_sf"/>
</dbReference>
<dbReference type="InterPro" id="IPR029063">
    <property type="entry name" value="SAM-dependent_MTases_sf"/>
</dbReference>
<dbReference type="InterPro" id="IPR023032">
    <property type="entry name" value="tRNA_MAMT_biosynth_bifunc_MnmC"/>
</dbReference>
<dbReference type="InterPro" id="IPR017610">
    <property type="entry name" value="tRNA_S-uridine_synth_MnmC_C"/>
</dbReference>
<dbReference type="NCBIfam" id="TIGR03197">
    <property type="entry name" value="MnmC_Cterm"/>
    <property type="match status" value="1"/>
</dbReference>
<dbReference type="PANTHER" id="PTHR13847">
    <property type="entry name" value="SARCOSINE DEHYDROGENASE-RELATED"/>
    <property type="match status" value="1"/>
</dbReference>
<dbReference type="PANTHER" id="PTHR13847:SF283">
    <property type="entry name" value="TRNA 5-METHYLAMINOMETHYL-2-THIOURIDINE BIOSYNTHESIS BIFUNCTIONAL PROTEIN MNMC"/>
    <property type="match status" value="1"/>
</dbReference>
<dbReference type="Pfam" id="PF01266">
    <property type="entry name" value="DAO"/>
    <property type="match status" value="1"/>
</dbReference>
<dbReference type="SUPFAM" id="SSF51905">
    <property type="entry name" value="FAD/NAD(P)-binding domain"/>
    <property type="match status" value="1"/>
</dbReference>